<reference key="1">
    <citation type="journal article" date="2003" name="Proc. Natl. Acad. Sci. U.S.A.">
        <title>Complete genome sequence of the marine planctomycete Pirellula sp. strain 1.</title>
        <authorList>
            <person name="Gloeckner F.O."/>
            <person name="Kube M."/>
            <person name="Bauer M."/>
            <person name="Teeling H."/>
            <person name="Lombardot T."/>
            <person name="Ludwig W."/>
            <person name="Gade D."/>
            <person name="Beck A."/>
            <person name="Borzym K."/>
            <person name="Heitmann K."/>
            <person name="Rabus R."/>
            <person name="Schlesner H."/>
            <person name="Amann R."/>
            <person name="Reinhardt R."/>
        </authorList>
    </citation>
    <scope>NUCLEOTIDE SEQUENCE [LARGE SCALE GENOMIC DNA]</scope>
    <source>
        <strain>DSM 10527 / NCIMB 13988 / SH1</strain>
    </source>
</reference>
<accession>Q7UPM4</accession>
<organism>
    <name type="scientific">Rhodopirellula baltica (strain DSM 10527 / NCIMB 13988 / SH1)</name>
    <dbReference type="NCBI Taxonomy" id="243090"/>
    <lineage>
        <taxon>Bacteria</taxon>
        <taxon>Pseudomonadati</taxon>
        <taxon>Planctomycetota</taxon>
        <taxon>Planctomycetia</taxon>
        <taxon>Pirellulales</taxon>
        <taxon>Pirellulaceae</taxon>
        <taxon>Rhodopirellula</taxon>
    </lineage>
</organism>
<proteinExistence type="inferred from homology"/>
<dbReference type="EC" id="2.7.6.1" evidence="1"/>
<dbReference type="EMBL" id="BX294145">
    <property type="protein sequence ID" value="CAD75037.1"/>
    <property type="molecule type" value="Genomic_DNA"/>
</dbReference>
<dbReference type="RefSeq" id="NP_867491.1">
    <property type="nucleotide sequence ID" value="NC_005027.1"/>
</dbReference>
<dbReference type="RefSeq" id="WP_007325730.1">
    <property type="nucleotide sequence ID" value="NC_005027.1"/>
</dbReference>
<dbReference type="SMR" id="Q7UPM4"/>
<dbReference type="FunCoup" id="Q7UPM4">
    <property type="interactions" value="573"/>
</dbReference>
<dbReference type="STRING" id="243090.RB6844"/>
<dbReference type="EnsemblBacteria" id="CAD75037">
    <property type="protein sequence ID" value="CAD75037"/>
    <property type="gene ID" value="RB6844"/>
</dbReference>
<dbReference type="KEGG" id="rba:RB6844"/>
<dbReference type="PATRIC" id="fig|243090.15.peg.3319"/>
<dbReference type="eggNOG" id="COG0462">
    <property type="taxonomic scope" value="Bacteria"/>
</dbReference>
<dbReference type="HOGENOM" id="CLU_033546_4_0_0"/>
<dbReference type="InParanoid" id="Q7UPM4"/>
<dbReference type="OrthoDB" id="9777067at2"/>
<dbReference type="UniPathway" id="UPA00087">
    <property type="reaction ID" value="UER00172"/>
</dbReference>
<dbReference type="Proteomes" id="UP000001025">
    <property type="component" value="Chromosome"/>
</dbReference>
<dbReference type="GO" id="GO:0005737">
    <property type="term" value="C:cytoplasm"/>
    <property type="evidence" value="ECO:0000318"/>
    <property type="project" value="GO_Central"/>
</dbReference>
<dbReference type="GO" id="GO:0002189">
    <property type="term" value="C:ribose phosphate diphosphokinase complex"/>
    <property type="evidence" value="ECO:0000318"/>
    <property type="project" value="GO_Central"/>
</dbReference>
<dbReference type="GO" id="GO:0005524">
    <property type="term" value="F:ATP binding"/>
    <property type="evidence" value="ECO:0007669"/>
    <property type="project" value="UniProtKB-KW"/>
</dbReference>
<dbReference type="GO" id="GO:0016301">
    <property type="term" value="F:kinase activity"/>
    <property type="evidence" value="ECO:0007669"/>
    <property type="project" value="UniProtKB-KW"/>
</dbReference>
<dbReference type="GO" id="GO:0000287">
    <property type="term" value="F:magnesium ion binding"/>
    <property type="evidence" value="ECO:0007669"/>
    <property type="project" value="UniProtKB-UniRule"/>
</dbReference>
<dbReference type="GO" id="GO:0004749">
    <property type="term" value="F:ribose phosphate diphosphokinase activity"/>
    <property type="evidence" value="ECO:0000318"/>
    <property type="project" value="GO_Central"/>
</dbReference>
<dbReference type="GO" id="GO:0006015">
    <property type="term" value="P:5-phosphoribose 1-diphosphate biosynthetic process"/>
    <property type="evidence" value="ECO:0000318"/>
    <property type="project" value="GO_Central"/>
</dbReference>
<dbReference type="GO" id="GO:0006164">
    <property type="term" value="P:purine nucleotide biosynthetic process"/>
    <property type="evidence" value="ECO:0000318"/>
    <property type="project" value="GO_Central"/>
</dbReference>
<dbReference type="GO" id="GO:0009156">
    <property type="term" value="P:ribonucleoside monophosphate biosynthetic process"/>
    <property type="evidence" value="ECO:0007669"/>
    <property type="project" value="InterPro"/>
</dbReference>
<dbReference type="CDD" id="cd06223">
    <property type="entry name" value="PRTases_typeI"/>
    <property type="match status" value="1"/>
</dbReference>
<dbReference type="FunFam" id="3.40.50.2020:FF:000001">
    <property type="entry name" value="Ribose-phosphate pyrophosphokinase"/>
    <property type="match status" value="1"/>
</dbReference>
<dbReference type="Gene3D" id="3.40.50.2020">
    <property type="match status" value="2"/>
</dbReference>
<dbReference type="HAMAP" id="MF_00583_B">
    <property type="entry name" value="RibP_PPkinase_B"/>
    <property type="match status" value="1"/>
</dbReference>
<dbReference type="InterPro" id="IPR000842">
    <property type="entry name" value="PRib_PP_synth_CS"/>
</dbReference>
<dbReference type="InterPro" id="IPR029099">
    <property type="entry name" value="Pribosyltran_N"/>
</dbReference>
<dbReference type="InterPro" id="IPR000836">
    <property type="entry name" value="PRibTrfase_dom"/>
</dbReference>
<dbReference type="InterPro" id="IPR029057">
    <property type="entry name" value="PRTase-like"/>
</dbReference>
<dbReference type="InterPro" id="IPR005946">
    <property type="entry name" value="Rib-P_diPkinase"/>
</dbReference>
<dbReference type="InterPro" id="IPR037515">
    <property type="entry name" value="Rib-P_diPkinase_bac"/>
</dbReference>
<dbReference type="NCBIfam" id="NF002320">
    <property type="entry name" value="PRK01259.1"/>
    <property type="match status" value="1"/>
</dbReference>
<dbReference type="NCBIfam" id="TIGR01251">
    <property type="entry name" value="ribP_PPkin"/>
    <property type="match status" value="1"/>
</dbReference>
<dbReference type="PANTHER" id="PTHR10210">
    <property type="entry name" value="RIBOSE-PHOSPHATE DIPHOSPHOKINASE FAMILY MEMBER"/>
    <property type="match status" value="1"/>
</dbReference>
<dbReference type="PANTHER" id="PTHR10210:SF41">
    <property type="entry name" value="RIBOSE-PHOSPHATE PYROPHOSPHOKINASE 1, CHLOROPLASTIC"/>
    <property type="match status" value="1"/>
</dbReference>
<dbReference type="Pfam" id="PF14572">
    <property type="entry name" value="Pribosyl_synth"/>
    <property type="match status" value="1"/>
</dbReference>
<dbReference type="Pfam" id="PF13793">
    <property type="entry name" value="Pribosyltran_N"/>
    <property type="match status" value="1"/>
</dbReference>
<dbReference type="SMART" id="SM01400">
    <property type="entry name" value="Pribosyltran_N"/>
    <property type="match status" value="1"/>
</dbReference>
<dbReference type="SUPFAM" id="SSF53271">
    <property type="entry name" value="PRTase-like"/>
    <property type="match status" value="1"/>
</dbReference>
<dbReference type="PROSITE" id="PS00114">
    <property type="entry name" value="PRPP_SYNTHASE"/>
    <property type="match status" value="1"/>
</dbReference>
<evidence type="ECO:0000255" key="1">
    <source>
        <dbReference type="HAMAP-Rule" id="MF_00583"/>
    </source>
</evidence>
<comment type="function">
    <text evidence="1">Involved in the biosynthesis of the central metabolite phospho-alpha-D-ribosyl-1-pyrophosphate (PRPP) via the transfer of pyrophosphoryl group from ATP to 1-hydroxyl of ribose-5-phosphate (Rib-5-P).</text>
</comment>
<comment type="catalytic activity">
    <reaction evidence="1">
        <text>D-ribose 5-phosphate + ATP = 5-phospho-alpha-D-ribose 1-diphosphate + AMP + H(+)</text>
        <dbReference type="Rhea" id="RHEA:15609"/>
        <dbReference type="ChEBI" id="CHEBI:15378"/>
        <dbReference type="ChEBI" id="CHEBI:30616"/>
        <dbReference type="ChEBI" id="CHEBI:58017"/>
        <dbReference type="ChEBI" id="CHEBI:78346"/>
        <dbReference type="ChEBI" id="CHEBI:456215"/>
        <dbReference type="EC" id="2.7.6.1"/>
    </reaction>
</comment>
<comment type="cofactor">
    <cofactor evidence="1">
        <name>Mg(2+)</name>
        <dbReference type="ChEBI" id="CHEBI:18420"/>
    </cofactor>
    <text evidence="1">Binds 2 Mg(2+) ions per subunit.</text>
</comment>
<comment type="pathway">
    <text evidence="1">Metabolic intermediate biosynthesis; 5-phospho-alpha-D-ribose 1-diphosphate biosynthesis; 5-phospho-alpha-D-ribose 1-diphosphate from D-ribose 5-phosphate (route I): step 1/1.</text>
</comment>
<comment type="subunit">
    <text evidence="1">Homohexamer.</text>
</comment>
<comment type="subcellular location">
    <subcellularLocation>
        <location evidence="1">Cytoplasm</location>
    </subcellularLocation>
</comment>
<comment type="similarity">
    <text evidence="1">Belongs to the ribose-phosphate pyrophosphokinase family. Class I subfamily.</text>
</comment>
<feature type="chain" id="PRO_0000141182" description="Ribose-phosphate pyrophosphokinase">
    <location>
        <begin position="1"/>
        <end position="316"/>
    </location>
</feature>
<feature type="active site" evidence="1">
    <location>
        <position position="194"/>
    </location>
</feature>
<feature type="binding site" evidence="1">
    <location>
        <begin position="37"/>
        <end position="39"/>
    </location>
    <ligand>
        <name>ATP</name>
        <dbReference type="ChEBI" id="CHEBI:30616"/>
    </ligand>
</feature>
<feature type="binding site" evidence="1">
    <location>
        <begin position="96"/>
        <end position="97"/>
    </location>
    <ligand>
        <name>ATP</name>
        <dbReference type="ChEBI" id="CHEBI:30616"/>
    </ligand>
</feature>
<feature type="binding site" evidence="1">
    <location>
        <position position="130"/>
    </location>
    <ligand>
        <name>Mg(2+)</name>
        <dbReference type="ChEBI" id="CHEBI:18420"/>
        <label>1</label>
    </ligand>
</feature>
<feature type="binding site" evidence="1">
    <location>
        <position position="171"/>
    </location>
    <ligand>
        <name>Mg(2+)</name>
        <dbReference type="ChEBI" id="CHEBI:18420"/>
        <label>2</label>
    </ligand>
</feature>
<feature type="binding site" evidence="1">
    <location>
        <position position="196"/>
    </location>
    <ligand>
        <name>D-ribose 5-phosphate</name>
        <dbReference type="ChEBI" id="CHEBI:78346"/>
    </ligand>
</feature>
<feature type="binding site" evidence="1">
    <location>
        <position position="221"/>
    </location>
    <ligand>
        <name>D-ribose 5-phosphate</name>
        <dbReference type="ChEBI" id="CHEBI:78346"/>
    </ligand>
</feature>
<sequence length="316" mass="34778">MRELKIFSGRANHDLAEKLCRHLHLKPARITLGQFPDGENYCKLDEDVRGRDVFLVQPTCPPVNDNLIELLTMIDCCKRASAERITAVIPYFGYARQDRKDEGRVPITAKLVANLITRAGADRVLTMDLHAAQIQGFFDVPVDHLYAAPVINDHFVSRRFAGDEVVVVSPDEGSIKRALGHTKRLGGNLAIVDKRRTNALEVRQNTIIGGPVEGKVALMFDDMISTAGSICGAARLVHEAGAKEIHIACTHGVLCGPAIERLREAPIDSITVTDTIPVTGEKLLPNLVQLSVAPLLAEAIKRIHHDQSISELFRER</sequence>
<name>KPRS_RHOBA</name>
<keyword id="KW-0067">ATP-binding</keyword>
<keyword id="KW-0963">Cytoplasm</keyword>
<keyword id="KW-0418">Kinase</keyword>
<keyword id="KW-0460">Magnesium</keyword>
<keyword id="KW-0479">Metal-binding</keyword>
<keyword id="KW-0545">Nucleotide biosynthesis</keyword>
<keyword id="KW-0547">Nucleotide-binding</keyword>
<keyword id="KW-1185">Reference proteome</keyword>
<keyword id="KW-0808">Transferase</keyword>
<protein>
    <recommendedName>
        <fullName evidence="1">Ribose-phosphate pyrophosphokinase</fullName>
        <shortName evidence="1">RPPK</shortName>
        <ecNumber evidence="1">2.7.6.1</ecNumber>
    </recommendedName>
    <alternativeName>
        <fullName evidence="1">5-phospho-D-ribosyl alpha-1-diphosphate synthase</fullName>
    </alternativeName>
    <alternativeName>
        <fullName evidence="1">Phosphoribosyl diphosphate synthase</fullName>
    </alternativeName>
    <alternativeName>
        <fullName evidence="1">Phosphoribosyl pyrophosphate synthase</fullName>
        <shortName evidence="1">P-Rib-PP synthase</shortName>
        <shortName evidence="1">PRPP synthase</shortName>
        <shortName evidence="1">PRPPase</shortName>
    </alternativeName>
</protein>
<gene>
    <name evidence="1" type="primary">prs</name>
    <name type="synonym">prsA</name>
    <name type="ordered locus">RB6844</name>
</gene>